<dbReference type="EMBL" id="CT971583">
    <property type="protein sequence ID" value="CAK24505.1"/>
    <property type="molecule type" value="Genomic_DNA"/>
</dbReference>
<dbReference type="SMR" id="A5GNJ0"/>
<dbReference type="STRING" id="32051.SynWH7803_2079"/>
<dbReference type="KEGG" id="syx:SynWH7803_2079"/>
<dbReference type="eggNOG" id="COG0532">
    <property type="taxonomic scope" value="Bacteria"/>
</dbReference>
<dbReference type="HOGENOM" id="CLU_006301_7_0_3"/>
<dbReference type="OrthoDB" id="9811804at2"/>
<dbReference type="Proteomes" id="UP000001566">
    <property type="component" value="Chromosome"/>
</dbReference>
<dbReference type="GO" id="GO:0005829">
    <property type="term" value="C:cytosol"/>
    <property type="evidence" value="ECO:0007669"/>
    <property type="project" value="TreeGrafter"/>
</dbReference>
<dbReference type="GO" id="GO:0005525">
    <property type="term" value="F:GTP binding"/>
    <property type="evidence" value="ECO:0007669"/>
    <property type="project" value="UniProtKB-KW"/>
</dbReference>
<dbReference type="GO" id="GO:0003924">
    <property type="term" value="F:GTPase activity"/>
    <property type="evidence" value="ECO:0007669"/>
    <property type="project" value="UniProtKB-UniRule"/>
</dbReference>
<dbReference type="GO" id="GO:0003743">
    <property type="term" value="F:translation initiation factor activity"/>
    <property type="evidence" value="ECO:0007669"/>
    <property type="project" value="UniProtKB-UniRule"/>
</dbReference>
<dbReference type="CDD" id="cd01887">
    <property type="entry name" value="IF2_eIF5B"/>
    <property type="match status" value="1"/>
</dbReference>
<dbReference type="CDD" id="cd03702">
    <property type="entry name" value="IF2_mtIF2_II"/>
    <property type="match status" value="1"/>
</dbReference>
<dbReference type="CDD" id="cd03692">
    <property type="entry name" value="mtIF2_IVc"/>
    <property type="match status" value="1"/>
</dbReference>
<dbReference type="FunFam" id="2.40.30.10:FF:000007">
    <property type="entry name" value="Translation initiation factor IF-2"/>
    <property type="match status" value="1"/>
</dbReference>
<dbReference type="FunFam" id="2.40.30.10:FF:000008">
    <property type="entry name" value="Translation initiation factor IF-2"/>
    <property type="match status" value="1"/>
</dbReference>
<dbReference type="FunFam" id="3.40.50.10050:FF:000001">
    <property type="entry name" value="Translation initiation factor IF-2"/>
    <property type="match status" value="1"/>
</dbReference>
<dbReference type="FunFam" id="3.40.50.300:FF:000019">
    <property type="entry name" value="Translation initiation factor IF-2"/>
    <property type="match status" value="1"/>
</dbReference>
<dbReference type="Gene3D" id="1.10.10.2480">
    <property type="match status" value="1"/>
</dbReference>
<dbReference type="Gene3D" id="3.40.50.300">
    <property type="entry name" value="P-loop containing nucleotide triphosphate hydrolases"/>
    <property type="match status" value="1"/>
</dbReference>
<dbReference type="Gene3D" id="2.40.30.10">
    <property type="entry name" value="Translation factors"/>
    <property type="match status" value="2"/>
</dbReference>
<dbReference type="Gene3D" id="3.40.50.10050">
    <property type="entry name" value="Translation initiation factor IF- 2, domain 3"/>
    <property type="match status" value="1"/>
</dbReference>
<dbReference type="HAMAP" id="MF_00100_B">
    <property type="entry name" value="IF_2_B"/>
    <property type="match status" value="1"/>
</dbReference>
<dbReference type="InterPro" id="IPR053905">
    <property type="entry name" value="EF-G-like_DII"/>
</dbReference>
<dbReference type="InterPro" id="IPR044145">
    <property type="entry name" value="IF2_II"/>
</dbReference>
<dbReference type="InterPro" id="IPR006847">
    <property type="entry name" value="IF2_N"/>
</dbReference>
<dbReference type="InterPro" id="IPR027417">
    <property type="entry name" value="P-loop_NTPase"/>
</dbReference>
<dbReference type="InterPro" id="IPR005225">
    <property type="entry name" value="Small_GTP-bd"/>
</dbReference>
<dbReference type="InterPro" id="IPR000795">
    <property type="entry name" value="T_Tr_GTP-bd_dom"/>
</dbReference>
<dbReference type="InterPro" id="IPR000178">
    <property type="entry name" value="TF_IF2_bacterial-like"/>
</dbReference>
<dbReference type="InterPro" id="IPR015760">
    <property type="entry name" value="TIF_IF2"/>
</dbReference>
<dbReference type="InterPro" id="IPR023115">
    <property type="entry name" value="TIF_IF2_dom3"/>
</dbReference>
<dbReference type="InterPro" id="IPR036925">
    <property type="entry name" value="TIF_IF2_dom3_sf"/>
</dbReference>
<dbReference type="InterPro" id="IPR009000">
    <property type="entry name" value="Transl_B-barrel_sf"/>
</dbReference>
<dbReference type="NCBIfam" id="TIGR00487">
    <property type="entry name" value="IF-2"/>
    <property type="match status" value="1"/>
</dbReference>
<dbReference type="NCBIfam" id="TIGR00231">
    <property type="entry name" value="small_GTP"/>
    <property type="match status" value="1"/>
</dbReference>
<dbReference type="PANTHER" id="PTHR43381:SF5">
    <property type="entry name" value="TR-TYPE G DOMAIN-CONTAINING PROTEIN"/>
    <property type="match status" value="1"/>
</dbReference>
<dbReference type="PANTHER" id="PTHR43381">
    <property type="entry name" value="TRANSLATION INITIATION FACTOR IF-2-RELATED"/>
    <property type="match status" value="1"/>
</dbReference>
<dbReference type="Pfam" id="PF22042">
    <property type="entry name" value="EF-G_D2"/>
    <property type="match status" value="1"/>
</dbReference>
<dbReference type="Pfam" id="PF00009">
    <property type="entry name" value="GTP_EFTU"/>
    <property type="match status" value="1"/>
</dbReference>
<dbReference type="Pfam" id="PF11987">
    <property type="entry name" value="IF-2"/>
    <property type="match status" value="1"/>
</dbReference>
<dbReference type="Pfam" id="PF04760">
    <property type="entry name" value="IF2_N"/>
    <property type="match status" value="2"/>
</dbReference>
<dbReference type="PRINTS" id="PR00315">
    <property type="entry name" value="ELONGATNFCT"/>
</dbReference>
<dbReference type="SUPFAM" id="SSF52156">
    <property type="entry name" value="Initiation factor IF2/eIF5b, domain 3"/>
    <property type="match status" value="1"/>
</dbReference>
<dbReference type="SUPFAM" id="SSF52540">
    <property type="entry name" value="P-loop containing nucleoside triphosphate hydrolases"/>
    <property type="match status" value="1"/>
</dbReference>
<dbReference type="SUPFAM" id="SSF50447">
    <property type="entry name" value="Translation proteins"/>
    <property type="match status" value="2"/>
</dbReference>
<dbReference type="PROSITE" id="PS51722">
    <property type="entry name" value="G_TR_2"/>
    <property type="match status" value="1"/>
</dbReference>
<dbReference type="PROSITE" id="PS01176">
    <property type="entry name" value="IF2"/>
    <property type="match status" value="1"/>
</dbReference>
<accession>A5GNJ0</accession>
<proteinExistence type="inferred from homology"/>
<protein>
    <recommendedName>
        <fullName evidence="2">Translation initiation factor IF-2</fullName>
    </recommendedName>
</protein>
<reference key="1">
    <citation type="submission" date="2006-05" db="EMBL/GenBank/DDBJ databases">
        <authorList>
            <consortium name="Genoscope"/>
        </authorList>
    </citation>
    <scope>NUCLEOTIDE SEQUENCE [LARGE SCALE GENOMIC DNA]</scope>
    <source>
        <strain>WH7803</strain>
    </source>
</reference>
<feature type="chain" id="PRO_1000008361" description="Translation initiation factor IF-2">
    <location>
        <begin position="1"/>
        <end position="1123"/>
    </location>
</feature>
<feature type="domain" description="tr-type G">
    <location>
        <begin position="615"/>
        <end position="787"/>
    </location>
</feature>
<feature type="region of interest" description="Disordered" evidence="3">
    <location>
        <begin position="52"/>
        <end position="452"/>
    </location>
</feature>
<feature type="region of interest" description="Disordered" evidence="3">
    <location>
        <begin position="480"/>
        <end position="512"/>
    </location>
</feature>
<feature type="region of interest" description="G1" evidence="1">
    <location>
        <begin position="624"/>
        <end position="631"/>
    </location>
</feature>
<feature type="region of interest" description="G2" evidence="1">
    <location>
        <begin position="649"/>
        <end position="653"/>
    </location>
</feature>
<feature type="region of interest" description="G3" evidence="1">
    <location>
        <begin position="674"/>
        <end position="677"/>
    </location>
</feature>
<feature type="region of interest" description="G4" evidence="1">
    <location>
        <begin position="728"/>
        <end position="731"/>
    </location>
</feature>
<feature type="region of interest" description="G5" evidence="1">
    <location>
        <begin position="764"/>
        <end position="766"/>
    </location>
</feature>
<feature type="compositionally biased region" description="Low complexity" evidence="3">
    <location>
        <begin position="54"/>
        <end position="73"/>
    </location>
</feature>
<feature type="compositionally biased region" description="Low complexity" evidence="3">
    <location>
        <begin position="94"/>
        <end position="113"/>
    </location>
</feature>
<feature type="compositionally biased region" description="Low complexity" evidence="3">
    <location>
        <begin position="121"/>
        <end position="133"/>
    </location>
</feature>
<feature type="compositionally biased region" description="Pro residues" evidence="3">
    <location>
        <begin position="170"/>
        <end position="187"/>
    </location>
</feature>
<feature type="compositionally biased region" description="Low complexity" evidence="3">
    <location>
        <begin position="193"/>
        <end position="206"/>
    </location>
</feature>
<feature type="compositionally biased region" description="Pro residues" evidence="3">
    <location>
        <begin position="207"/>
        <end position="217"/>
    </location>
</feature>
<feature type="compositionally biased region" description="Pro residues" evidence="3">
    <location>
        <begin position="258"/>
        <end position="268"/>
    </location>
</feature>
<feature type="compositionally biased region" description="Low complexity" evidence="3">
    <location>
        <begin position="285"/>
        <end position="304"/>
    </location>
</feature>
<feature type="compositionally biased region" description="Gly residues" evidence="3">
    <location>
        <begin position="320"/>
        <end position="339"/>
    </location>
</feature>
<feature type="compositionally biased region" description="Pro residues" evidence="3">
    <location>
        <begin position="388"/>
        <end position="403"/>
    </location>
</feature>
<feature type="compositionally biased region" description="Gly residues" evidence="3">
    <location>
        <begin position="412"/>
        <end position="422"/>
    </location>
</feature>
<feature type="compositionally biased region" description="Basic and acidic residues" evidence="3">
    <location>
        <begin position="425"/>
        <end position="439"/>
    </location>
</feature>
<feature type="compositionally biased region" description="Low complexity" evidence="3">
    <location>
        <begin position="486"/>
        <end position="499"/>
    </location>
</feature>
<feature type="compositionally biased region" description="Basic residues" evidence="3">
    <location>
        <begin position="500"/>
        <end position="512"/>
    </location>
</feature>
<feature type="binding site" evidence="2">
    <location>
        <begin position="624"/>
        <end position="631"/>
    </location>
    <ligand>
        <name>GTP</name>
        <dbReference type="ChEBI" id="CHEBI:37565"/>
    </ligand>
</feature>
<feature type="binding site" evidence="2">
    <location>
        <begin position="674"/>
        <end position="678"/>
    </location>
    <ligand>
        <name>GTP</name>
        <dbReference type="ChEBI" id="CHEBI:37565"/>
    </ligand>
</feature>
<feature type="binding site" evidence="2">
    <location>
        <begin position="728"/>
        <end position="731"/>
    </location>
    <ligand>
        <name>GTP</name>
        <dbReference type="ChEBI" id="CHEBI:37565"/>
    </ligand>
</feature>
<comment type="function">
    <text evidence="2">One of the essential components for the initiation of protein synthesis. Protects formylmethionyl-tRNA from spontaneous hydrolysis and promotes its binding to the 30S ribosomal subunits. Also involved in the hydrolysis of GTP during the formation of the 70S ribosomal complex.</text>
</comment>
<comment type="subcellular location">
    <subcellularLocation>
        <location evidence="2">Cytoplasm</location>
    </subcellularLocation>
</comment>
<comment type="similarity">
    <text evidence="2">Belongs to the TRAFAC class translation factor GTPase superfamily. Classic translation factor GTPase family. IF-2 subfamily.</text>
</comment>
<keyword id="KW-0963">Cytoplasm</keyword>
<keyword id="KW-0342">GTP-binding</keyword>
<keyword id="KW-0396">Initiation factor</keyword>
<keyword id="KW-0547">Nucleotide-binding</keyword>
<keyword id="KW-0648">Protein biosynthesis</keyword>
<keyword id="KW-1185">Reference proteome</keyword>
<name>IF2_SYNPW</name>
<sequence length="1123" mass="118866">MTSSGKVRIYELSKDLGLDNKDVLDAAEKLSIAAKSHSSSISETEAGKIRSLLKAGSAPRAAASPSKPAPGKAILSVQKAGSGSNSPARPEQPKPAASSPPAAPAAPTKAKSPQQPPARPAAPSRPAAPKASATQTSAPQKPVVRQQPTAQQPVPRPKPKTAPERTVSRPPSPPARPVPQQPSPPSAKPRGTAPIRRAAPNDAPRPANAPPSRPQPKTPVNRTAPPPQRPAAKPELVGRPQPRRPEGPPTRQGAGPGSPRPAVSPRPSAPGSQRNMPQRPAGAQRPGAPTRPGTGAGRPSRPGGNTLELVGKPIRRDGSGNRGEGGRPPGGARPAGGGNRPAMPPGMRKPVAPGELMQLQKPSGRPGVPPPRRPDGTPVTPRGDGPKATPPVSRPTATPPSPATAPRRPGGFRPGAGPGGQRRPGRPDWDDSAKLDALRNRSPQKQRQKVHIIGENDDSLAAQTGGFAGEQQNMVLSASLARPSKPKSQQKAAPKPVAAMRKRRKETTRQRQRRRAMELRAAREAKQVRPEMIVVPEDNLTVQELADMLSVESSEIIKSLFFKGIIATVTQSLDMPTIETVAEEFGVPVLQDDVEEAAKKTVEMIEEQDLEHLIRRPPVVTVMGHVDHGKTSLLDAIRKARVAAGEAGGITQHIGAYQVEIEHSGEPRRLTFLDTPGHEAFTAMRARGTKVTDVAVLVVAADDGVRPQTLEAISHARAAEVPIVVAINKIDKEGASPDRVKQELSEQNLLAEEWGGDVVMVPVSAIKSENIDKLLEMLLLVTEVEDLQANPDRLARGTVIEAHLDKAKGPVATLLVQNGTLRTGDVVAAGPVLGKVRAMVDDASVRLKEAGPSCAVEALGFSEVPTAGDEFEVYPDEKSARAVVGDRASDARATRLAQQMASRRVSLTAMSGQANDGDLKELNLILKADVQGSVEAILGSLEQLPKDEVQVRVLLSAPGEITETDVDLAAASGAVIVGFNTSMASGARKAADANGVDVRDYDVIYKLLEDIQLAMEGLLEPELVEEALGEAEVRAVFTIGKSAVAGCYVTTGKLQRNCKVRVHRGKEIVYAGDLDSLRRNKDDVKEVATGFECGVGTDRFANWQDGDRIEAFKMVTQRRKLTT</sequence>
<evidence type="ECO:0000250" key="1"/>
<evidence type="ECO:0000255" key="2">
    <source>
        <dbReference type="HAMAP-Rule" id="MF_00100"/>
    </source>
</evidence>
<evidence type="ECO:0000256" key="3">
    <source>
        <dbReference type="SAM" id="MobiDB-lite"/>
    </source>
</evidence>
<organism>
    <name type="scientific">Synechococcus sp. (strain WH7803)</name>
    <dbReference type="NCBI Taxonomy" id="32051"/>
    <lineage>
        <taxon>Bacteria</taxon>
        <taxon>Bacillati</taxon>
        <taxon>Cyanobacteriota</taxon>
        <taxon>Cyanophyceae</taxon>
        <taxon>Synechococcales</taxon>
        <taxon>Synechococcaceae</taxon>
        <taxon>Synechococcus</taxon>
    </lineage>
</organism>
<gene>
    <name evidence="2" type="primary">infB</name>
    <name type="ordered locus">SynWH7803_2079</name>
</gene>